<comment type="catalytic activity">
    <reaction evidence="1">
        <text>tRNA(Phe) + L-phenylalanine + ATP = L-phenylalanyl-tRNA(Phe) + AMP + diphosphate + H(+)</text>
        <dbReference type="Rhea" id="RHEA:19413"/>
        <dbReference type="Rhea" id="RHEA-COMP:9668"/>
        <dbReference type="Rhea" id="RHEA-COMP:9699"/>
        <dbReference type="ChEBI" id="CHEBI:15378"/>
        <dbReference type="ChEBI" id="CHEBI:30616"/>
        <dbReference type="ChEBI" id="CHEBI:33019"/>
        <dbReference type="ChEBI" id="CHEBI:58095"/>
        <dbReference type="ChEBI" id="CHEBI:78442"/>
        <dbReference type="ChEBI" id="CHEBI:78531"/>
        <dbReference type="ChEBI" id="CHEBI:456215"/>
        <dbReference type="EC" id="6.1.1.20"/>
    </reaction>
</comment>
<comment type="cofactor">
    <cofactor evidence="1">
        <name>Mg(2+)</name>
        <dbReference type="ChEBI" id="CHEBI:18420"/>
    </cofactor>
    <text evidence="1">Binds 2 magnesium ions per tetramer.</text>
</comment>
<comment type="subunit">
    <text evidence="1">Tetramer of two alpha and two beta subunits.</text>
</comment>
<comment type="subcellular location">
    <subcellularLocation>
        <location evidence="1">Cytoplasm</location>
    </subcellularLocation>
</comment>
<comment type="similarity">
    <text evidence="1">Belongs to the class-II aminoacyl-tRNA synthetase family. Phe-tRNA synthetase alpha subunit type 1 subfamily.</text>
</comment>
<gene>
    <name evidence="1" type="primary">pheS</name>
    <name type="ordered locus">CTA_0911</name>
</gene>
<feature type="chain" id="PRO_0000231972" description="Phenylalanine--tRNA ligase alpha subunit">
    <location>
        <begin position="1"/>
        <end position="342"/>
    </location>
</feature>
<feature type="binding site" evidence="1">
    <location>
        <position position="257"/>
    </location>
    <ligand>
        <name>Mg(2+)</name>
        <dbReference type="ChEBI" id="CHEBI:18420"/>
        <note>shared with beta subunit</note>
    </ligand>
</feature>
<proteinExistence type="inferred from homology"/>
<evidence type="ECO:0000255" key="1">
    <source>
        <dbReference type="HAMAP-Rule" id="MF_00281"/>
    </source>
</evidence>
<dbReference type="EC" id="6.1.1.20" evidence="1"/>
<dbReference type="EMBL" id="CP000051">
    <property type="protein sequence ID" value="AAX51119.1"/>
    <property type="molecule type" value="Genomic_DNA"/>
</dbReference>
<dbReference type="RefSeq" id="WP_011324887.1">
    <property type="nucleotide sequence ID" value="NC_007429.1"/>
</dbReference>
<dbReference type="SMR" id="Q3KKK3"/>
<dbReference type="KEGG" id="cta:CTA_0911"/>
<dbReference type="HOGENOM" id="CLU_025086_0_1_0"/>
<dbReference type="Proteomes" id="UP000002532">
    <property type="component" value="Chromosome"/>
</dbReference>
<dbReference type="GO" id="GO:0005737">
    <property type="term" value="C:cytoplasm"/>
    <property type="evidence" value="ECO:0007669"/>
    <property type="project" value="UniProtKB-SubCell"/>
</dbReference>
<dbReference type="GO" id="GO:0005524">
    <property type="term" value="F:ATP binding"/>
    <property type="evidence" value="ECO:0007669"/>
    <property type="project" value="UniProtKB-UniRule"/>
</dbReference>
<dbReference type="GO" id="GO:0000287">
    <property type="term" value="F:magnesium ion binding"/>
    <property type="evidence" value="ECO:0007669"/>
    <property type="project" value="UniProtKB-UniRule"/>
</dbReference>
<dbReference type="GO" id="GO:0004826">
    <property type="term" value="F:phenylalanine-tRNA ligase activity"/>
    <property type="evidence" value="ECO:0007669"/>
    <property type="project" value="UniProtKB-UniRule"/>
</dbReference>
<dbReference type="GO" id="GO:0000049">
    <property type="term" value="F:tRNA binding"/>
    <property type="evidence" value="ECO:0007669"/>
    <property type="project" value="InterPro"/>
</dbReference>
<dbReference type="GO" id="GO:0006432">
    <property type="term" value="P:phenylalanyl-tRNA aminoacylation"/>
    <property type="evidence" value="ECO:0007669"/>
    <property type="project" value="UniProtKB-UniRule"/>
</dbReference>
<dbReference type="CDD" id="cd00496">
    <property type="entry name" value="PheRS_alpha_core"/>
    <property type="match status" value="1"/>
</dbReference>
<dbReference type="FunFam" id="3.30.930.10:FF:000183">
    <property type="entry name" value="Phenylalanine--tRNA ligase alpha subunit"/>
    <property type="match status" value="1"/>
</dbReference>
<dbReference type="Gene3D" id="3.30.930.10">
    <property type="entry name" value="Bira Bifunctional Protein, Domain 2"/>
    <property type="match status" value="1"/>
</dbReference>
<dbReference type="HAMAP" id="MF_00281">
    <property type="entry name" value="Phe_tRNA_synth_alpha1"/>
    <property type="match status" value="1"/>
</dbReference>
<dbReference type="InterPro" id="IPR006195">
    <property type="entry name" value="aa-tRNA-synth_II"/>
</dbReference>
<dbReference type="InterPro" id="IPR045864">
    <property type="entry name" value="aa-tRNA-synth_II/BPL/LPL"/>
</dbReference>
<dbReference type="InterPro" id="IPR004529">
    <property type="entry name" value="Phe-tRNA-synth_IIc_asu"/>
</dbReference>
<dbReference type="InterPro" id="IPR004188">
    <property type="entry name" value="Phe-tRNA_ligase_II_N"/>
</dbReference>
<dbReference type="InterPro" id="IPR022911">
    <property type="entry name" value="Phe_tRNA_ligase_alpha1_bac"/>
</dbReference>
<dbReference type="InterPro" id="IPR002319">
    <property type="entry name" value="Phenylalanyl-tRNA_Synthase"/>
</dbReference>
<dbReference type="InterPro" id="IPR010978">
    <property type="entry name" value="tRNA-bd_arm"/>
</dbReference>
<dbReference type="NCBIfam" id="TIGR00468">
    <property type="entry name" value="pheS"/>
    <property type="match status" value="1"/>
</dbReference>
<dbReference type="PANTHER" id="PTHR11538:SF41">
    <property type="entry name" value="PHENYLALANINE--TRNA LIGASE, MITOCHONDRIAL"/>
    <property type="match status" value="1"/>
</dbReference>
<dbReference type="PANTHER" id="PTHR11538">
    <property type="entry name" value="PHENYLALANYL-TRNA SYNTHETASE"/>
    <property type="match status" value="1"/>
</dbReference>
<dbReference type="Pfam" id="PF02912">
    <property type="entry name" value="Phe_tRNA-synt_N"/>
    <property type="match status" value="1"/>
</dbReference>
<dbReference type="Pfam" id="PF01409">
    <property type="entry name" value="tRNA-synt_2d"/>
    <property type="match status" value="1"/>
</dbReference>
<dbReference type="SUPFAM" id="SSF55681">
    <property type="entry name" value="Class II aaRS and biotin synthetases"/>
    <property type="match status" value="1"/>
</dbReference>
<dbReference type="SUPFAM" id="SSF46589">
    <property type="entry name" value="tRNA-binding arm"/>
    <property type="match status" value="1"/>
</dbReference>
<dbReference type="PROSITE" id="PS50862">
    <property type="entry name" value="AA_TRNA_LIGASE_II"/>
    <property type="match status" value="1"/>
</dbReference>
<reference key="1">
    <citation type="journal article" date="2005" name="Infect. Immun.">
        <title>Comparative genomic analysis of Chlamydia trachomatis oculotropic and genitotropic strains.</title>
        <authorList>
            <person name="Carlson J.H."/>
            <person name="Porcella S.F."/>
            <person name="McClarty G."/>
            <person name="Caldwell H.D."/>
        </authorList>
    </citation>
    <scope>NUCLEOTIDE SEQUENCE [LARGE SCALE GENOMIC DNA]</scope>
    <source>
        <strain>ATCC VR-571B / DSM 19440 / HAR-13</strain>
    </source>
</reference>
<keyword id="KW-0030">Aminoacyl-tRNA synthetase</keyword>
<keyword id="KW-0067">ATP-binding</keyword>
<keyword id="KW-0963">Cytoplasm</keyword>
<keyword id="KW-0436">Ligase</keyword>
<keyword id="KW-0460">Magnesium</keyword>
<keyword id="KW-0479">Metal-binding</keyword>
<keyword id="KW-0547">Nucleotide-binding</keyword>
<keyword id="KW-0648">Protein biosynthesis</keyword>
<sequence length="342" mass="38585">MTIQEELEAIKQQFSCDVSLAHSSKDLFDVKVKYLGKKGIFRGFADQLRKCPIEQKATVGASINACKQYVEEVLLERGKAVLAKEEAEEFLKEKIDISLPGSEEAALGGKHVIKKVLDDVVDIFVRFGFCVREAPNIESEKNNFSLLNFEGDHPARQMQDTFYLDPTTVLRTHTSNVQSRELARNKPPVRIVAPGECFRNEDVSARSHVIFHQVEAFCVDKDISFSDLTSMLAGFYHIFFGRKVELRFRHSYFPFVEPGIEVDISCECHGAGCSLCKHSGWLEVAGAGMIHPNVLRKASIDPEEYSGYALGMGIERLAMLKYGISDIRLFSENDLRFLRQFS</sequence>
<accession>Q3KKK3</accession>
<organism>
    <name type="scientific">Chlamydia trachomatis serovar A (strain ATCC VR-571B / DSM 19440 / HAR-13)</name>
    <dbReference type="NCBI Taxonomy" id="315277"/>
    <lineage>
        <taxon>Bacteria</taxon>
        <taxon>Pseudomonadati</taxon>
        <taxon>Chlamydiota</taxon>
        <taxon>Chlamydiia</taxon>
        <taxon>Chlamydiales</taxon>
        <taxon>Chlamydiaceae</taxon>
        <taxon>Chlamydia/Chlamydophila group</taxon>
        <taxon>Chlamydia</taxon>
    </lineage>
</organism>
<protein>
    <recommendedName>
        <fullName evidence="1">Phenylalanine--tRNA ligase alpha subunit</fullName>
        <ecNumber evidence="1">6.1.1.20</ecNumber>
    </recommendedName>
    <alternativeName>
        <fullName evidence="1">Phenylalanyl-tRNA synthetase alpha subunit</fullName>
        <shortName evidence="1">PheRS</shortName>
    </alternativeName>
</protein>
<name>SYFA_CHLTA</name>